<accession>L7X735</accession>
<keyword id="KW-1015">Disulfide bond</keyword>
<keyword id="KW-0646">Protease inhibitor</keyword>
<keyword id="KW-0964">Secreted</keyword>
<keyword id="KW-0722">Serine protease inhibitor</keyword>
<keyword id="KW-0732">Signal</keyword>
<proteinExistence type="evidence at transcript level"/>
<organism>
    <name type="scientific">Araneus ventricosus</name>
    <name type="common">Orbweaver spider</name>
    <name type="synonym">Epeira ventricosa</name>
    <dbReference type="NCBI Taxonomy" id="182803"/>
    <lineage>
        <taxon>Eukaryota</taxon>
        <taxon>Metazoa</taxon>
        <taxon>Ecdysozoa</taxon>
        <taxon>Arthropoda</taxon>
        <taxon>Chelicerata</taxon>
        <taxon>Arachnida</taxon>
        <taxon>Araneae</taxon>
        <taxon>Araneomorphae</taxon>
        <taxon>Entelegynae</taxon>
        <taxon>Araneoidea</taxon>
        <taxon>Araneidae</taxon>
        <taxon>Araneus</taxon>
    </lineage>
</organism>
<evidence type="ECO:0000250" key="1">
    <source>
        <dbReference type="UniProtKB" id="P56682"/>
    </source>
</evidence>
<evidence type="ECO:0000255" key="2"/>
<evidence type="ECO:0000269" key="3">
    <source>
    </source>
</evidence>
<evidence type="ECO:0000303" key="4">
    <source>
    </source>
</evidence>
<evidence type="ECO:0000305" key="5"/>
<evidence type="ECO:0000305" key="6">
    <source>
    </source>
</evidence>
<evidence type="ECO:0000312" key="7">
    <source>
        <dbReference type="EMBL" id="AGC95074.1"/>
    </source>
</evidence>
<sequence>MKTLCIFLVLVVAVAAFPPFISQHDCPPNKEFGSYGDCPPSCLKNPPNFCTLKLNYGCKCKEGYVLTRYQDYESDCIKPEECPDDS</sequence>
<comment type="function">
    <text evidence="3">Serine protease inhibitor that inhibits chymotrypsin (IC(50)=34.13 nM, Ki=49.85 nM), microbial serine proteases (subtilisin A (IC(50)=21.31 nM, Ki=20.51 nM) and proteinase K (IC(50)=52.56 nM, Ki=65.42 nM)), as well as human neutrophil elastase (IC(50)=11.54 nM, Ki=8.74 nM), and porcine pancreatic elastase (IC(50)=19.07 nM, Ki=11.32 nM).</text>
</comment>
<comment type="subcellular location">
    <subcellularLocation>
        <location evidence="6">Secreted</location>
    </subcellularLocation>
</comment>
<comment type="tissue specificity">
    <text evidence="3">Only expressed in fat body.</text>
</comment>
<comment type="miscellaneous">
    <text evidence="3">Negative results: does not inhibit trypsin, plasmin, tPA, thrombin and factor Xa. Is not expressed in epidermis, silk gland and venom gland.</text>
</comment>
<comment type="similarity">
    <text evidence="5">Belongs to the serine protease inhibitor-like (TIL domain-containing) family.</text>
</comment>
<feature type="signal peptide" evidence="2">
    <location>
        <begin position="1"/>
        <end position="16"/>
    </location>
</feature>
<feature type="chain" id="PRO_5003985605" description="Chymotrypsin inhibitor">
    <location>
        <begin position="17"/>
        <end position="86"/>
    </location>
</feature>
<feature type="domain" description="TIL" evidence="2">
    <location>
        <begin position="26"/>
        <end position="82"/>
    </location>
</feature>
<feature type="disulfide bond" evidence="1">
    <location>
        <begin position="26"/>
        <end position="58"/>
    </location>
</feature>
<feature type="disulfide bond" evidence="1">
    <location>
        <begin position="38"/>
        <end position="50"/>
    </location>
</feature>
<feature type="disulfide bond" evidence="1">
    <location>
        <begin position="42"/>
        <end position="82"/>
    </location>
</feature>
<feature type="disulfide bond" evidence="1">
    <location>
        <begin position="60"/>
        <end position="76"/>
    </location>
</feature>
<name>TIL_ARAVE</name>
<protein>
    <recommendedName>
        <fullName evidence="4">Chymotrypsin inhibitor</fullName>
        <shortName evidence="4">AvCI</shortName>
    </recommendedName>
</protein>
<reference evidence="7" key="1">
    <citation type="journal article" date="2013" name="Comp. Biochem. Physiol.">
        <title>A spider (Araneus ventricosus) chymotrypsin inhibitor that acts as an elastase inhibitor and a microbial serine protease inhibitor.</title>
        <authorList>
            <person name="Wan H."/>
            <person name="Lee K.S."/>
            <person name="Kim B.Y."/>
            <person name="Yuan M."/>
            <person name="Zhan S."/>
            <person name="You H."/>
            <person name="Li J."/>
            <person name="Jin B.R."/>
        </authorList>
    </citation>
    <scope>NUCLEOTIDE SEQUENCE [MRNA]</scope>
    <scope>FUNCTION</scope>
    <scope>TISSUE SPECIFICITY</scope>
    <scope>RECOMBINANT EXPRESSION</scope>
</reference>
<dbReference type="EMBL" id="KC493634">
    <property type="protein sequence ID" value="AGC95074.1"/>
    <property type="molecule type" value="mRNA"/>
</dbReference>
<dbReference type="GO" id="GO:0005615">
    <property type="term" value="C:extracellular space"/>
    <property type="evidence" value="ECO:0000303"/>
    <property type="project" value="UniProtKB"/>
</dbReference>
<dbReference type="GO" id="GO:0004867">
    <property type="term" value="F:serine-type endopeptidase inhibitor activity"/>
    <property type="evidence" value="ECO:0000314"/>
    <property type="project" value="UniProtKB"/>
</dbReference>
<dbReference type="CDD" id="cd19941">
    <property type="entry name" value="TIL"/>
    <property type="match status" value="1"/>
</dbReference>
<dbReference type="Gene3D" id="2.10.25.10">
    <property type="entry name" value="Laminin"/>
    <property type="match status" value="1"/>
</dbReference>
<dbReference type="InterPro" id="IPR036084">
    <property type="entry name" value="Ser_inhib-like_sf"/>
</dbReference>
<dbReference type="InterPro" id="IPR002919">
    <property type="entry name" value="TIL_dom"/>
</dbReference>
<dbReference type="Pfam" id="PF01826">
    <property type="entry name" value="TIL"/>
    <property type="match status" value="1"/>
</dbReference>
<dbReference type="SUPFAM" id="SSF57567">
    <property type="entry name" value="Serine protease inhibitors"/>
    <property type="match status" value="1"/>
</dbReference>